<name>HRCA_FRACC</name>
<organism>
    <name type="scientific">Frankia casuarinae (strain DSM 45818 / CECT 9043 / HFP020203 / CcI3)</name>
    <dbReference type="NCBI Taxonomy" id="106370"/>
    <lineage>
        <taxon>Bacteria</taxon>
        <taxon>Bacillati</taxon>
        <taxon>Actinomycetota</taxon>
        <taxon>Actinomycetes</taxon>
        <taxon>Frankiales</taxon>
        <taxon>Frankiaceae</taxon>
        <taxon>Frankia</taxon>
    </lineage>
</organism>
<reference key="1">
    <citation type="journal article" date="2007" name="Genome Res.">
        <title>Genome characteristics of facultatively symbiotic Frankia sp. strains reflect host range and host plant biogeography.</title>
        <authorList>
            <person name="Normand P."/>
            <person name="Lapierre P."/>
            <person name="Tisa L.S."/>
            <person name="Gogarten J.P."/>
            <person name="Alloisio N."/>
            <person name="Bagnarol E."/>
            <person name="Bassi C.A."/>
            <person name="Berry A.M."/>
            <person name="Bickhart D.M."/>
            <person name="Choisne N."/>
            <person name="Couloux A."/>
            <person name="Cournoyer B."/>
            <person name="Cruveiller S."/>
            <person name="Daubin V."/>
            <person name="Demange N."/>
            <person name="Francino M.P."/>
            <person name="Goltsman E."/>
            <person name="Huang Y."/>
            <person name="Kopp O.R."/>
            <person name="Labarre L."/>
            <person name="Lapidus A."/>
            <person name="Lavire C."/>
            <person name="Marechal J."/>
            <person name="Martinez M."/>
            <person name="Mastronunzio J.E."/>
            <person name="Mullin B.C."/>
            <person name="Niemann J."/>
            <person name="Pujic P."/>
            <person name="Rawnsley T."/>
            <person name="Rouy Z."/>
            <person name="Schenowitz C."/>
            <person name="Sellstedt A."/>
            <person name="Tavares F."/>
            <person name="Tomkins J.P."/>
            <person name="Vallenet D."/>
            <person name="Valverde C."/>
            <person name="Wall L.G."/>
            <person name="Wang Y."/>
            <person name="Medigue C."/>
            <person name="Benson D.R."/>
        </authorList>
    </citation>
    <scope>NUCLEOTIDE SEQUENCE [LARGE SCALE GENOMIC DNA]</scope>
    <source>
        <strain>DSM 45818 / CECT 9043 / HFP020203 / CcI3</strain>
    </source>
</reference>
<accession>Q2JDK0</accession>
<evidence type="ECO:0000255" key="1">
    <source>
        <dbReference type="HAMAP-Rule" id="MF_00081"/>
    </source>
</evidence>
<proteinExistence type="inferred from homology"/>
<keyword id="KW-1185">Reference proteome</keyword>
<keyword id="KW-0678">Repressor</keyword>
<keyword id="KW-0346">Stress response</keyword>
<keyword id="KW-0804">Transcription</keyword>
<keyword id="KW-0805">Transcription regulation</keyword>
<feature type="chain" id="PRO_1000010409" description="Heat-inducible transcription repressor HrcA">
    <location>
        <begin position="1"/>
        <end position="339"/>
    </location>
</feature>
<comment type="function">
    <text evidence="1">Negative regulator of class I heat shock genes (grpE-dnaK-dnaJ and groELS operons). Prevents heat-shock induction of these operons.</text>
</comment>
<comment type="similarity">
    <text evidence="1">Belongs to the HrcA family.</text>
</comment>
<dbReference type="EMBL" id="CP000249">
    <property type="protein sequence ID" value="ABD10642.1"/>
    <property type="molecule type" value="Genomic_DNA"/>
</dbReference>
<dbReference type="RefSeq" id="WP_011435708.1">
    <property type="nucleotide sequence ID" value="NZ_JENI01000006.1"/>
</dbReference>
<dbReference type="SMR" id="Q2JDK0"/>
<dbReference type="STRING" id="106370.Francci3_1264"/>
<dbReference type="KEGG" id="fra:Francci3_1264"/>
<dbReference type="eggNOG" id="COG1420">
    <property type="taxonomic scope" value="Bacteria"/>
</dbReference>
<dbReference type="HOGENOM" id="CLU_050019_2_0_11"/>
<dbReference type="OrthoDB" id="9783139at2"/>
<dbReference type="PhylomeDB" id="Q2JDK0"/>
<dbReference type="Proteomes" id="UP000001937">
    <property type="component" value="Chromosome"/>
</dbReference>
<dbReference type="GO" id="GO:0003677">
    <property type="term" value="F:DNA binding"/>
    <property type="evidence" value="ECO:0007669"/>
    <property type="project" value="InterPro"/>
</dbReference>
<dbReference type="GO" id="GO:0003700">
    <property type="term" value="F:DNA-binding transcription factor activity"/>
    <property type="evidence" value="ECO:0007669"/>
    <property type="project" value="InterPro"/>
</dbReference>
<dbReference type="GO" id="GO:0045892">
    <property type="term" value="P:negative regulation of DNA-templated transcription"/>
    <property type="evidence" value="ECO:0007669"/>
    <property type="project" value="UniProtKB-UniRule"/>
</dbReference>
<dbReference type="FunFam" id="1.10.10.10:FF:000049">
    <property type="entry name" value="Heat-inducible transcription repressor HrcA"/>
    <property type="match status" value="1"/>
</dbReference>
<dbReference type="Gene3D" id="3.30.450.40">
    <property type="match status" value="1"/>
</dbReference>
<dbReference type="Gene3D" id="3.30.390.60">
    <property type="entry name" value="Heat-inducible transcription repressor hrca homolog, domain 3"/>
    <property type="match status" value="1"/>
</dbReference>
<dbReference type="Gene3D" id="1.10.10.10">
    <property type="entry name" value="Winged helix-like DNA-binding domain superfamily/Winged helix DNA-binding domain"/>
    <property type="match status" value="1"/>
</dbReference>
<dbReference type="HAMAP" id="MF_00081">
    <property type="entry name" value="HrcA"/>
    <property type="match status" value="1"/>
</dbReference>
<dbReference type="InterPro" id="IPR001034">
    <property type="entry name" value="DeoR_HTH"/>
</dbReference>
<dbReference type="InterPro" id="IPR029016">
    <property type="entry name" value="GAF-like_dom_sf"/>
</dbReference>
<dbReference type="InterPro" id="IPR002571">
    <property type="entry name" value="HrcA"/>
</dbReference>
<dbReference type="InterPro" id="IPR021153">
    <property type="entry name" value="HrcA_C"/>
</dbReference>
<dbReference type="InterPro" id="IPR036388">
    <property type="entry name" value="WH-like_DNA-bd_sf"/>
</dbReference>
<dbReference type="InterPro" id="IPR036390">
    <property type="entry name" value="WH_DNA-bd_sf"/>
</dbReference>
<dbReference type="InterPro" id="IPR023120">
    <property type="entry name" value="WHTH_transcript_rep_HrcA_IDD"/>
</dbReference>
<dbReference type="NCBIfam" id="TIGR00331">
    <property type="entry name" value="hrcA"/>
    <property type="match status" value="1"/>
</dbReference>
<dbReference type="PANTHER" id="PTHR34824">
    <property type="entry name" value="HEAT-INDUCIBLE TRANSCRIPTION REPRESSOR HRCA"/>
    <property type="match status" value="1"/>
</dbReference>
<dbReference type="PANTHER" id="PTHR34824:SF1">
    <property type="entry name" value="HEAT-INDUCIBLE TRANSCRIPTION REPRESSOR HRCA"/>
    <property type="match status" value="1"/>
</dbReference>
<dbReference type="Pfam" id="PF01628">
    <property type="entry name" value="HrcA"/>
    <property type="match status" value="1"/>
</dbReference>
<dbReference type="Pfam" id="PF08220">
    <property type="entry name" value="HTH_DeoR"/>
    <property type="match status" value="1"/>
</dbReference>
<dbReference type="PIRSF" id="PIRSF005485">
    <property type="entry name" value="HrcA"/>
    <property type="match status" value="1"/>
</dbReference>
<dbReference type="SUPFAM" id="SSF55781">
    <property type="entry name" value="GAF domain-like"/>
    <property type="match status" value="1"/>
</dbReference>
<dbReference type="SUPFAM" id="SSF46785">
    <property type="entry name" value="Winged helix' DNA-binding domain"/>
    <property type="match status" value="1"/>
</dbReference>
<sequence>MLEDRRLEVLRAIVEDFVLSNEPVGSKALAERHNLGVSPATVRNDMSALEEEGYITQPHTSAGRIPTDKGYRLFVDRLSGVKPLSRAERRAIQSFLEGAVDLDDVVRRSVRLLAQLTRQVAVVQYPSLSSSSIRHIEVVTLGPYRLLMVLITDTGRVEQRIVDSLVPVDDEVAGELRSVLNCALAGRRLVDAPDIVAALPDSTRSELRPYLTTVAGAVLESLVERQEERIAMAGTANLTRSPVDFADSLRSILEALEEQVVLMKLIGSARETGTVTVRIGRETDVDALRSTAVVATGYGRGPFALGGMGVLGPMRMDYPGTMAAVRAVAKYVGELLGAD</sequence>
<protein>
    <recommendedName>
        <fullName evidence="1">Heat-inducible transcription repressor HrcA</fullName>
    </recommendedName>
</protein>
<gene>
    <name evidence="1" type="primary">hrcA</name>
    <name type="ordered locus">Francci3_1264</name>
</gene>